<evidence type="ECO:0000250" key="1">
    <source>
        <dbReference type="UniProtKB" id="Q17RC7"/>
    </source>
</evidence>
<evidence type="ECO:0000256" key="2">
    <source>
        <dbReference type="SAM" id="MobiDB-lite"/>
    </source>
</evidence>
<evidence type="ECO:0000305" key="3"/>
<organism>
    <name type="scientific">Mus musculus</name>
    <name type="common">Mouse</name>
    <dbReference type="NCBI Taxonomy" id="10090"/>
    <lineage>
        <taxon>Eukaryota</taxon>
        <taxon>Metazoa</taxon>
        <taxon>Chordata</taxon>
        <taxon>Craniata</taxon>
        <taxon>Vertebrata</taxon>
        <taxon>Euteleostomi</taxon>
        <taxon>Mammalia</taxon>
        <taxon>Eutheria</taxon>
        <taxon>Euarchontoglires</taxon>
        <taxon>Glires</taxon>
        <taxon>Rodentia</taxon>
        <taxon>Myomorpha</taxon>
        <taxon>Muroidea</taxon>
        <taxon>Muridae</taxon>
        <taxon>Murinae</taxon>
        <taxon>Mus</taxon>
        <taxon>Mus</taxon>
    </lineage>
</organism>
<reference key="1">
    <citation type="journal article" date="2005" name="Science">
        <title>The transcriptional landscape of the mammalian genome.</title>
        <authorList>
            <person name="Carninci P."/>
            <person name="Kasukawa T."/>
            <person name="Katayama S."/>
            <person name="Gough J."/>
            <person name="Frith M.C."/>
            <person name="Maeda N."/>
            <person name="Oyama R."/>
            <person name="Ravasi T."/>
            <person name="Lenhard B."/>
            <person name="Wells C."/>
            <person name="Kodzius R."/>
            <person name="Shimokawa K."/>
            <person name="Bajic V.B."/>
            <person name="Brenner S.E."/>
            <person name="Batalov S."/>
            <person name="Forrest A.R."/>
            <person name="Zavolan M."/>
            <person name="Davis M.J."/>
            <person name="Wilming L.G."/>
            <person name="Aidinis V."/>
            <person name="Allen J.E."/>
            <person name="Ambesi-Impiombato A."/>
            <person name="Apweiler R."/>
            <person name="Aturaliya R.N."/>
            <person name="Bailey T.L."/>
            <person name="Bansal M."/>
            <person name="Baxter L."/>
            <person name="Beisel K.W."/>
            <person name="Bersano T."/>
            <person name="Bono H."/>
            <person name="Chalk A.M."/>
            <person name="Chiu K.P."/>
            <person name="Choudhary V."/>
            <person name="Christoffels A."/>
            <person name="Clutterbuck D.R."/>
            <person name="Crowe M.L."/>
            <person name="Dalla E."/>
            <person name="Dalrymple B.P."/>
            <person name="de Bono B."/>
            <person name="Della Gatta G."/>
            <person name="di Bernardo D."/>
            <person name="Down T."/>
            <person name="Engstrom P."/>
            <person name="Fagiolini M."/>
            <person name="Faulkner G."/>
            <person name="Fletcher C.F."/>
            <person name="Fukushima T."/>
            <person name="Furuno M."/>
            <person name="Futaki S."/>
            <person name="Gariboldi M."/>
            <person name="Georgii-Hemming P."/>
            <person name="Gingeras T.R."/>
            <person name="Gojobori T."/>
            <person name="Green R.E."/>
            <person name="Gustincich S."/>
            <person name="Harbers M."/>
            <person name="Hayashi Y."/>
            <person name="Hensch T.K."/>
            <person name="Hirokawa N."/>
            <person name="Hill D."/>
            <person name="Huminiecki L."/>
            <person name="Iacono M."/>
            <person name="Ikeo K."/>
            <person name="Iwama A."/>
            <person name="Ishikawa T."/>
            <person name="Jakt M."/>
            <person name="Kanapin A."/>
            <person name="Katoh M."/>
            <person name="Kawasawa Y."/>
            <person name="Kelso J."/>
            <person name="Kitamura H."/>
            <person name="Kitano H."/>
            <person name="Kollias G."/>
            <person name="Krishnan S.P."/>
            <person name="Kruger A."/>
            <person name="Kummerfeld S.K."/>
            <person name="Kurochkin I.V."/>
            <person name="Lareau L.F."/>
            <person name="Lazarevic D."/>
            <person name="Lipovich L."/>
            <person name="Liu J."/>
            <person name="Liuni S."/>
            <person name="McWilliam S."/>
            <person name="Madan Babu M."/>
            <person name="Madera M."/>
            <person name="Marchionni L."/>
            <person name="Matsuda H."/>
            <person name="Matsuzawa S."/>
            <person name="Miki H."/>
            <person name="Mignone F."/>
            <person name="Miyake S."/>
            <person name="Morris K."/>
            <person name="Mottagui-Tabar S."/>
            <person name="Mulder N."/>
            <person name="Nakano N."/>
            <person name="Nakauchi H."/>
            <person name="Ng P."/>
            <person name="Nilsson R."/>
            <person name="Nishiguchi S."/>
            <person name="Nishikawa S."/>
            <person name="Nori F."/>
            <person name="Ohara O."/>
            <person name="Okazaki Y."/>
            <person name="Orlando V."/>
            <person name="Pang K.C."/>
            <person name="Pavan W.J."/>
            <person name="Pavesi G."/>
            <person name="Pesole G."/>
            <person name="Petrovsky N."/>
            <person name="Piazza S."/>
            <person name="Reed J."/>
            <person name="Reid J.F."/>
            <person name="Ring B.Z."/>
            <person name="Ringwald M."/>
            <person name="Rost B."/>
            <person name="Ruan Y."/>
            <person name="Salzberg S.L."/>
            <person name="Sandelin A."/>
            <person name="Schneider C."/>
            <person name="Schoenbach C."/>
            <person name="Sekiguchi K."/>
            <person name="Semple C.A."/>
            <person name="Seno S."/>
            <person name="Sessa L."/>
            <person name="Sheng Y."/>
            <person name="Shibata Y."/>
            <person name="Shimada H."/>
            <person name="Shimada K."/>
            <person name="Silva D."/>
            <person name="Sinclair B."/>
            <person name="Sperling S."/>
            <person name="Stupka E."/>
            <person name="Sugiura K."/>
            <person name="Sultana R."/>
            <person name="Takenaka Y."/>
            <person name="Taki K."/>
            <person name="Tammoja K."/>
            <person name="Tan S.L."/>
            <person name="Tang S."/>
            <person name="Taylor M.S."/>
            <person name="Tegner J."/>
            <person name="Teichmann S.A."/>
            <person name="Ueda H.R."/>
            <person name="van Nimwegen E."/>
            <person name="Verardo R."/>
            <person name="Wei C.L."/>
            <person name="Yagi K."/>
            <person name="Yamanishi H."/>
            <person name="Zabarovsky E."/>
            <person name="Zhu S."/>
            <person name="Zimmer A."/>
            <person name="Hide W."/>
            <person name="Bult C."/>
            <person name="Grimmond S.M."/>
            <person name="Teasdale R.D."/>
            <person name="Liu E.T."/>
            <person name="Brusic V."/>
            <person name="Quackenbush J."/>
            <person name="Wahlestedt C."/>
            <person name="Mattick J.S."/>
            <person name="Hume D.A."/>
            <person name="Kai C."/>
            <person name="Sasaki D."/>
            <person name="Tomaru Y."/>
            <person name="Fukuda S."/>
            <person name="Kanamori-Katayama M."/>
            <person name="Suzuki M."/>
            <person name="Aoki J."/>
            <person name="Arakawa T."/>
            <person name="Iida J."/>
            <person name="Imamura K."/>
            <person name="Itoh M."/>
            <person name="Kato T."/>
            <person name="Kawaji H."/>
            <person name="Kawagashira N."/>
            <person name="Kawashima T."/>
            <person name="Kojima M."/>
            <person name="Kondo S."/>
            <person name="Konno H."/>
            <person name="Nakano K."/>
            <person name="Ninomiya N."/>
            <person name="Nishio T."/>
            <person name="Okada M."/>
            <person name="Plessy C."/>
            <person name="Shibata K."/>
            <person name="Shiraki T."/>
            <person name="Suzuki S."/>
            <person name="Tagami M."/>
            <person name="Waki K."/>
            <person name="Watahiki A."/>
            <person name="Okamura-Oho Y."/>
            <person name="Suzuki H."/>
            <person name="Kawai J."/>
            <person name="Hayashizaki Y."/>
        </authorList>
    </citation>
    <scope>NUCLEOTIDE SEQUENCE [LARGE SCALE MRNA]</scope>
    <source>
        <strain>C57BL/6J</strain>
        <tissue>Placenta</tissue>
    </source>
</reference>
<reference key="2">
    <citation type="journal article" date="2004" name="Genome Res.">
        <title>The status, quality, and expansion of the NIH full-length cDNA project: the Mammalian Gene Collection (MGC).</title>
        <authorList>
            <consortium name="The MGC Project Team"/>
        </authorList>
    </citation>
    <scope>NUCLEOTIDE SEQUENCE [LARGE SCALE MRNA]</scope>
    <source>
        <strain>C57BL/6J</strain>
        <strain>Czech II</strain>
        <tissue>Eye</tissue>
        <tissue>Mammary gland</tissue>
    </source>
</reference>
<reference key="3">
    <citation type="journal article" date="2010" name="Cell">
        <title>A tissue-specific atlas of mouse protein phosphorylation and expression.</title>
        <authorList>
            <person name="Huttlin E.L."/>
            <person name="Jedrychowski M.P."/>
            <person name="Elias J.E."/>
            <person name="Goswami T."/>
            <person name="Rad R."/>
            <person name="Beausoleil S.A."/>
            <person name="Villen J."/>
            <person name="Haas W."/>
            <person name="Sowa M.E."/>
            <person name="Gygi S.P."/>
        </authorList>
    </citation>
    <scope>IDENTIFICATION BY MASS SPECTROMETRY [LARGE SCALE ANALYSIS]</scope>
    <source>
        <tissue>Lung</tissue>
        <tissue>Spleen</tissue>
    </source>
</reference>
<sequence>MPLPQTGAPGPEVKSPREPRKSQTLPVTTWKSNSMKEQSVHHGGSLRPSLGMLKQTLFRTSLRTSTHKPKEDPGLFRRSSRFLFRSLRRAIDEGLTAGHPQGPAVPEKPSKVTDGVSRQAATGTEAEDLEPQAESKSVADLITERQLVKAFEQLRYLETQLVADKTSRTFTQDPTAYARRAMDLCLHYDGMAAEIGAIVREALSSEGVDRDALAELAQVVHLEEEAHQTSQAEGDFLSTPRHWRMHWEDAVRLSAQESVQQAGAKVIPGAAEGSSDLAQLLAELGGVVRHDLQKVRLEMQPAYEATDFPVWETYLRAFHSAVAQRLQELARDARGCEQLYVLLDWAANVYGSPDFLGAPDLALPTEPLPPLLEPALWARLESDYTSFLETKITSCFDSILQLEQNRWEADEDREVLQGLYHAPLSIDVHMLVAEHVKAAGAISAELEATTLQICARALCLFVPRFEKAFLASKAVSEWYLGAYINACVELRTSLLARFPGTIKELEKPLVAATNSFQKHLLQIVQQDMQPLFKVLYTKSWLTQDTLRPLMDKVVDFAHHLEHVTPPLAQETLQEVHRFVVREYLGQVLRPHERFSGQDRLKGSNKMNLDAQAISNTFQGLGSEAKWLDQAILSVAEILGETYKDDIRRHLETLIRSYPDIRRDHILAILALRRLGRRRNQNLLQHTQDLLRAAHETRLPSHHVLFEEIEVPTSVDVLITCI</sequence>
<feature type="chain" id="PRO_0000274381" description="Exocyst complex component 3-like protein 4">
    <location>
        <begin position="1"/>
        <end position="721"/>
    </location>
</feature>
<feature type="region of interest" description="Disordered" evidence="2">
    <location>
        <begin position="1"/>
        <end position="52"/>
    </location>
</feature>
<feature type="region of interest" description="Disordered" evidence="2">
    <location>
        <begin position="94"/>
        <end position="135"/>
    </location>
</feature>
<feature type="compositionally biased region" description="Polar residues" evidence="2">
    <location>
        <begin position="22"/>
        <end position="37"/>
    </location>
</feature>
<feature type="modified residue" description="Phosphoserine" evidence="1">
    <location>
        <position position="515"/>
    </location>
</feature>
<feature type="sequence conflict" description="In Ref. 1; BAB24037." evidence="3" ref="1">
    <original>S</original>
    <variation>R</variation>
    <location>
        <position position="258"/>
    </location>
</feature>
<feature type="sequence conflict" description="In Ref. 2; AAH75664." evidence="3" ref="2">
    <original>Q</original>
    <variation>H</variation>
    <location>
        <position position="680"/>
    </location>
</feature>
<name>EX3L4_MOUSE</name>
<comment type="similarity">
    <text evidence="3">Belongs to the SEC6 family.</text>
</comment>
<proteinExistence type="evidence at protein level"/>
<accession>Q6DIA2</accession>
<accession>Q80UY5</accession>
<accession>Q9DAX8</accession>
<dbReference type="EMBL" id="AK005443">
    <property type="protein sequence ID" value="BAB24037.1"/>
    <property type="molecule type" value="mRNA"/>
</dbReference>
<dbReference type="EMBL" id="BC042799">
    <property type="protein sequence ID" value="AAH42799.1"/>
    <property type="molecule type" value="mRNA"/>
</dbReference>
<dbReference type="EMBL" id="BC075664">
    <property type="protein sequence ID" value="AAH75664.1"/>
    <property type="molecule type" value="mRNA"/>
</dbReference>
<dbReference type="CCDS" id="CCDS26177.1"/>
<dbReference type="RefSeq" id="NP_001276416.1">
    <property type="nucleotide sequence ID" value="NM_001289487.1"/>
</dbReference>
<dbReference type="RefSeq" id="NP_001276417.1">
    <property type="nucleotide sequence ID" value="NM_001289488.1"/>
</dbReference>
<dbReference type="RefSeq" id="NP_001276418.1">
    <property type="nucleotide sequence ID" value="NM_001289489.1"/>
</dbReference>
<dbReference type="RefSeq" id="NP_083083.3">
    <property type="nucleotide sequence ID" value="NM_028807.4"/>
</dbReference>
<dbReference type="RefSeq" id="XP_006516352.1">
    <property type="nucleotide sequence ID" value="XM_006516289.2"/>
</dbReference>
<dbReference type="RefSeq" id="XP_006516354.1">
    <property type="nucleotide sequence ID" value="XM_006516291.3"/>
</dbReference>
<dbReference type="RefSeq" id="XP_006516355.1">
    <property type="nucleotide sequence ID" value="XM_006516292.3"/>
</dbReference>
<dbReference type="SMR" id="Q6DIA2"/>
<dbReference type="BioGRID" id="216562">
    <property type="interactions" value="1"/>
</dbReference>
<dbReference type="FunCoup" id="Q6DIA2">
    <property type="interactions" value="5"/>
</dbReference>
<dbReference type="STRING" id="10090.ENSMUSP00000152337"/>
<dbReference type="iPTMnet" id="Q6DIA2"/>
<dbReference type="PhosphoSitePlus" id="Q6DIA2"/>
<dbReference type="PaxDb" id="10090-ENSMUSP00000072438"/>
<dbReference type="PeptideAtlas" id="Q6DIA2"/>
<dbReference type="ProteomicsDB" id="275554"/>
<dbReference type="DNASU" id="74190"/>
<dbReference type="GeneID" id="74190"/>
<dbReference type="KEGG" id="mmu:74190"/>
<dbReference type="UCSC" id="uc007pcv.2">
    <property type="organism name" value="mouse"/>
</dbReference>
<dbReference type="AGR" id="MGI:1921363"/>
<dbReference type="CTD" id="91828"/>
<dbReference type="MGI" id="MGI:1921363">
    <property type="gene designation" value="Exoc3l4"/>
</dbReference>
<dbReference type="eggNOG" id="KOG2286">
    <property type="taxonomic scope" value="Eukaryota"/>
</dbReference>
<dbReference type="InParanoid" id="Q6DIA2"/>
<dbReference type="OrthoDB" id="190098at2759"/>
<dbReference type="PhylomeDB" id="Q6DIA2"/>
<dbReference type="TreeFam" id="TF314979"/>
<dbReference type="BioGRID-ORCS" id="74190">
    <property type="hits" value="0 hits in 78 CRISPR screens"/>
</dbReference>
<dbReference type="PRO" id="PR:Q6DIA2"/>
<dbReference type="Proteomes" id="UP000000589">
    <property type="component" value="Unplaced"/>
</dbReference>
<dbReference type="RNAct" id="Q6DIA2">
    <property type="molecule type" value="protein"/>
</dbReference>
<dbReference type="GO" id="GO:0000145">
    <property type="term" value="C:exocyst"/>
    <property type="evidence" value="ECO:0007669"/>
    <property type="project" value="InterPro"/>
</dbReference>
<dbReference type="GO" id="GO:0006887">
    <property type="term" value="P:exocytosis"/>
    <property type="evidence" value="ECO:0007669"/>
    <property type="project" value="InterPro"/>
</dbReference>
<dbReference type="FunFam" id="1.10.357.70:FF:000006">
    <property type="entry name" value="Exocyst complex component 3 like 4"/>
    <property type="match status" value="1"/>
</dbReference>
<dbReference type="Gene3D" id="1.10.357.70">
    <property type="entry name" value="Exocyst complex component Sec6, C-terminal domain"/>
    <property type="match status" value="1"/>
</dbReference>
<dbReference type="InterPro" id="IPR010326">
    <property type="entry name" value="EXOC3/Sec6"/>
</dbReference>
<dbReference type="InterPro" id="IPR042532">
    <property type="entry name" value="EXOC3/Sec6_C"/>
</dbReference>
<dbReference type="PANTHER" id="PTHR21292:SF14">
    <property type="entry name" value="EXOCYST COMPLEX COMPONENT 3-LIKE PROTEIN 4"/>
    <property type="match status" value="1"/>
</dbReference>
<dbReference type="PANTHER" id="PTHR21292">
    <property type="entry name" value="EXOCYST COMPLEX COMPONENT SEC6-RELATED"/>
    <property type="match status" value="1"/>
</dbReference>
<dbReference type="Pfam" id="PF06046">
    <property type="entry name" value="Sec6"/>
    <property type="match status" value="1"/>
</dbReference>
<protein>
    <recommendedName>
        <fullName>Exocyst complex component 3-like protein 4</fullName>
    </recommendedName>
</protein>
<keyword id="KW-0597">Phosphoprotein</keyword>
<keyword id="KW-1185">Reference proteome</keyword>
<gene>
    <name type="primary">Exoc3l4</name>
</gene>